<organism>
    <name type="scientific">Streptococcus pyogenes serotype M3 (strain ATCC BAA-595 / MGAS315)</name>
    <dbReference type="NCBI Taxonomy" id="198466"/>
    <lineage>
        <taxon>Bacteria</taxon>
        <taxon>Bacillati</taxon>
        <taxon>Bacillota</taxon>
        <taxon>Bacilli</taxon>
        <taxon>Lactobacillales</taxon>
        <taxon>Streptococcaceae</taxon>
        <taxon>Streptococcus</taxon>
    </lineage>
</organism>
<name>ATPG_STRP3</name>
<proteinExistence type="inferred from homology"/>
<gene>
    <name evidence="1" type="primary">atpG</name>
    <name type="ordered locus">SpyM3_0498</name>
</gene>
<keyword id="KW-0066">ATP synthesis</keyword>
<keyword id="KW-1003">Cell membrane</keyword>
<keyword id="KW-0139">CF(1)</keyword>
<keyword id="KW-0375">Hydrogen ion transport</keyword>
<keyword id="KW-0406">Ion transport</keyword>
<keyword id="KW-0472">Membrane</keyword>
<keyword id="KW-0813">Transport</keyword>
<reference key="1">
    <citation type="journal article" date="2002" name="Proc. Natl. Acad. Sci. U.S.A.">
        <title>Genome sequence of a serotype M3 strain of group A Streptococcus: phage-encoded toxins, the high-virulence phenotype, and clone emergence.</title>
        <authorList>
            <person name="Beres S.B."/>
            <person name="Sylva G.L."/>
            <person name="Barbian K.D."/>
            <person name="Lei B."/>
            <person name="Hoff J.S."/>
            <person name="Mammarella N.D."/>
            <person name="Liu M.-Y."/>
            <person name="Smoot J.C."/>
            <person name="Porcella S.F."/>
            <person name="Parkins L.D."/>
            <person name="Campbell D.S."/>
            <person name="Smith T.M."/>
            <person name="McCormick J.K."/>
            <person name="Leung D.Y.M."/>
            <person name="Schlievert P.M."/>
            <person name="Musser J.M."/>
        </authorList>
    </citation>
    <scope>NUCLEOTIDE SEQUENCE [LARGE SCALE GENOMIC DNA]</scope>
    <source>
        <strain>ATCC BAA-595 / MGAS315</strain>
    </source>
</reference>
<evidence type="ECO:0000255" key="1">
    <source>
        <dbReference type="HAMAP-Rule" id="MF_00815"/>
    </source>
</evidence>
<protein>
    <recommendedName>
        <fullName evidence="1">ATP synthase gamma chain</fullName>
    </recommendedName>
    <alternativeName>
        <fullName evidence="1">ATP synthase F1 sector gamma subunit</fullName>
    </alternativeName>
    <alternativeName>
        <fullName evidence="1">F-ATPase gamma subunit</fullName>
    </alternativeName>
</protein>
<feature type="chain" id="PRO_0000073392" description="ATP synthase gamma chain">
    <location>
        <begin position="1"/>
        <end position="291"/>
    </location>
</feature>
<accession>P0CZ98</accession>
<accession>Q79WQ4</accession>
<accession>Q8K827</accession>
<comment type="function">
    <text evidence="1">Produces ATP from ADP in the presence of a proton gradient across the membrane. The gamma chain is believed to be important in regulating ATPase activity and the flow of protons through the CF(0) complex.</text>
</comment>
<comment type="subunit">
    <text evidence="1">F-type ATPases have 2 components, CF(1) - the catalytic core - and CF(0) - the membrane proton channel. CF(1) has five subunits: alpha(3), beta(3), gamma(1), delta(1), epsilon(1). CF(0) has three main subunits: a, b and c.</text>
</comment>
<comment type="subcellular location">
    <subcellularLocation>
        <location evidence="1">Cell membrane</location>
        <topology evidence="1">Peripheral membrane protein</topology>
    </subcellularLocation>
</comment>
<comment type="similarity">
    <text evidence="1">Belongs to the ATPase gamma chain family.</text>
</comment>
<dbReference type="EMBL" id="AE014074">
    <property type="protein sequence ID" value="AAM79105.1"/>
    <property type="molecule type" value="Genomic_DNA"/>
</dbReference>
<dbReference type="RefSeq" id="WP_011054331.1">
    <property type="nucleotide sequence ID" value="NC_004070.1"/>
</dbReference>
<dbReference type="SMR" id="P0CZ98"/>
<dbReference type="KEGG" id="spg:SpyM3_0498"/>
<dbReference type="HOGENOM" id="CLU_050669_0_1_9"/>
<dbReference type="Proteomes" id="UP000000564">
    <property type="component" value="Chromosome"/>
</dbReference>
<dbReference type="GO" id="GO:0005886">
    <property type="term" value="C:plasma membrane"/>
    <property type="evidence" value="ECO:0007669"/>
    <property type="project" value="UniProtKB-SubCell"/>
</dbReference>
<dbReference type="GO" id="GO:0045259">
    <property type="term" value="C:proton-transporting ATP synthase complex"/>
    <property type="evidence" value="ECO:0007669"/>
    <property type="project" value="UniProtKB-KW"/>
</dbReference>
<dbReference type="GO" id="GO:0005524">
    <property type="term" value="F:ATP binding"/>
    <property type="evidence" value="ECO:0007669"/>
    <property type="project" value="UniProtKB-UniRule"/>
</dbReference>
<dbReference type="GO" id="GO:0046933">
    <property type="term" value="F:proton-transporting ATP synthase activity, rotational mechanism"/>
    <property type="evidence" value="ECO:0007669"/>
    <property type="project" value="UniProtKB-UniRule"/>
</dbReference>
<dbReference type="GO" id="GO:0042777">
    <property type="term" value="P:proton motive force-driven plasma membrane ATP synthesis"/>
    <property type="evidence" value="ECO:0007669"/>
    <property type="project" value="UniProtKB-UniRule"/>
</dbReference>
<dbReference type="CDD" id="cd12151">
    <property type="entry name" value="F1-ATPase_gamma"/>
    <property type="match status" value="1"/>
</dbReference>
<dbReference type="FunFam" id="3.40.1380.10:FF:000002">
    <property type="entry name" value="ATP synthase gamma chain"/>
    <property type="match status" value="1"/>
</dbReference>
<dbReference type="Gene3D" id="3.40.1380.10">
    <property type="match status" value="1"/>
</dbReference>
<dbReference type="Gene3D" id="1.10.287.80">
    <property type="entry name" value="ATP synthase, gamma subunit, helix hairpin domain"/>
    <property type="match status" value="1"/>
</dbReference>
<dbReference type="HAMAP" id="MF_00815">
    <property type="entry name" value="ATP_synth_gamma_bact"/>
    <property type="match status" value="1"/>
</dbReference>
<dbReference type="InterPro" id="IPR035968">
    <property type="entry name" value="ATP_synth_F1_ATPase_gsu"/>
</dbReference>
<dbReference type="InterPro" id="IPR000131">
    <property type="entry name" value="ATP_synth_F1_gsu"/>
</dbReference>
<dbReference type="InterPro" id="IPR023632">
    <property type="entry name" value="ATP_synth_F1_gsu_CS"/>
</dbReference>
<dbReference type="NCBIfam" id="TIGR01146">
    <property type="entry name" value="ATPsyn_F1gamma"/>
    <property type="match status" value="1"/>
</dbReference>
<dbReference type="NCBIfam" id="NF004147">
    <property type="entry name" value="PRK05621.2-1"/>
    <property type="match status" value="1"/>
</dbReference>
<dbReference type="PANTHER" id="PTHR11693">
    <property type="entry name" value="ATP SYNTHASE GAMMA CHAIN"/>
    <property type="match status" value="1"/>
</dbReference>
<dbReference type="PANTHER" id="PTHR11693:SF22">
    <property type="entry name" value="ATP SYNTHASE SUBUNIT GAMMA, MITOCHONDRIAL"/>
    <property type="match status" value="1"/>
</dbReference>
<dbReference type="Pfam" id="PF00231">
    <property type="entry name" value="ATP-synt"/>
    <property type="match status" value="1"/>
</dbReference>
<dbReference type="PRINTS" id="PR00126">
    <property type="entry name" value="ATPASEGAMMA"/>
</dbReference>
<dbReference type="SUPFAM" id="SSF52943">
    <property type="entry name" value="ATP synthase (F1-ATPase), gamma subunit"/>
    <property type="match status" value="1"/>
</dbReference>
<dbReference type="PROSITE" id="PS00153">
    <property type="entry name" value="ATPASE_GAMMA"/>
    <property type="match status" value="1"/>
</dbReference>
<sequence>MAGSLSEIKAKIISTEKTSKITSAMRMVSSAKLVRSEQAARDFQIYASKIRQITTDLLKSELTIGSDNPMLVSRPVKKTGYIVITSDKGLVGGYNSKILKSVMDMITEYHADGDYEIISIGSVGSDFFKARGMNVAFELRGLADQPSFEQVRQIISQSVDMFVNEIFDELYVCYNHHVNSLTSQVRVQQMLPISDLVADEAAEEGVTGFELEPNRHDILDQLLPQFTESLIYGAIIDAKTAEHAAGMTAMQTATDNAKNVINDLTIQYNRARQAAITQEITEIVAGANALE</sequence>